<gene>
    <name type="ordered locus">DVU_2259</name>
</gene>
<protein>
    <recommendedName>
        <fullName evidence="1">Probable transcriptional regulatory protein DVU_2259</fullName>
    </recommendedName>
</protein>
<name>Y2259_NITV2</name>
<evidence type="ECO:0000255" key="1">
    <source>
        <dbReference type="HAMAP-Rule" id="MF_00693"/>
    </source>
</evidence>
<evidence type="ECO:0000256" key="2">
    <source>
        <dbReference type="SAM" id="MobiDB-lite"/>
    </source>
</evidence>
<accession>P62035</accession>
<reference key="1">
    <citation type="journal article" date="2004" name="Nat. Biotechnol.">
        <title>The genome sequence of the anaerobic, sulfate-reducing bacterium Desulfovibrio vulgaris Hildenborough.</title>
        <authorList>
            <person name="Heidelberg J.F."/>
            <person name="Seshadri R."/>
            <person name="Haveman S.A."/>
            <person name="Hemme C.L."/>
            <person name="Paulsen I.T."/>
            <person name="Kolonay J.F."/>
            <person name="Eisen J.A."/>
            <person name="Ward N.L."/>
            <person name="Methe B.A."/>
            <person name="Brinkac L.M."/>
            <person name="Daugherty S.C."/>
            <person name="DeBoy R.T."/>
            <person name="Dodson R.J."/>
            <person name="Durkin A.S."/>
            <person name="Madupu R."/>
            <person name="Nelson W.C."/>
            <person name="Sullivan S.A."/>
            <person name="Fouts D.E."/>
            <person name="Haft D.H."/>
            <person name="Selengut J."/>
            <person name="Peterson J.D."/>
            <person name="Davidsen T.M."/>
            <person name="Zafar N."/>
            <person name="Zhou L."/>
            <person name="Radune D."/>
            <person name="Dimitrov G."/>
            <person name="Hance M."/>
            <person name="Tran K."/>
            <person name="Khouri H.M."/>
            <person name="Gill J."/>
            <person name="Utterback T.R."/>
            <person name="Feldblyum T.V."/>
            <person name="Wall J.D."/>
            <person name="Voordouw G."/>
            <person name="Fraser C.M."/>
        </authorList>
    </citation>
    <scope>NUCLEOTIDE SEQUENCE [LARGE SCALE GENOMIC DNA]</scope>
    <source>
        <strain>ATCC 29579 / DSM 644 / CCUG 34227 / NCIMB 8303 / VKM B-1760 / Hildenborough</strain>
    </source>
</reference>
<organism>
    <name type="scientific">Nitratidesulfovibrio vulgaris (strain ATCC 29579 / DSM 644 / CCUG 34227 / NCIMB 8303 / VKM B-1760 / Hildenborough)</name>
    <name type="common">Desulfovibrio vulgaris</name>
    <dbReference type="NCBI Taxonomy" id="882"/>
    <lineage>
        <taxon>Bacteria</taxon>
        <taxon>Pseudomonadati</taxon>
        <taxon>Thermodesulfobacteriota</taxon>
        <taxon>Desulfovibrionia</taxon>
        <taxon>Desulfovibrionales</taxon>
        <taxon>Desulfovibrionaceae</taxon>
        <taxon>Nitratidesulfovibrio</taxon>
    </lineage>
</organism>
<comment type="interaction">
    <interactant intactId="EBI-10064948">
        <id>P62035</id>
    </interactant>
    <interactant intactId="EBI-10064938">
        <id>Q72BM5</id>
        <label>nadE</label>
    </interactant>
    <organismsDiffer>false</organismsDiffer>
    <experiments>4</experiments>
</comment>
<comment type="subcellular location">
    <subcellularLocation>
        <location evidence="1">Cytoplasm</location>
    </subcellularLocation>
</comment>
<comment type="similarity">
    <text evidence="1">Belongs to the TACO1 family.</text>
</comment>
<feature type="chain" id="PRO_0000175798" description="Probable transcriptional regulatory protein DVU_2259">
    <location>
        <begin position="1"/>
        <end position="247"/>
    </location>
</feature>
<feature type="region of interest" description="Disordered" evidence="2">
    <location>
        <begin position="1"/>
        <end position="22"/>
    </location>
</feature>
<proteinExistence type="evidence at protein level"/>
<keyword id="KW-0963">Cytoplasm</keyword>
<keyword id="KW-0238">DNA-binding</keyword>
<keyword id="KW-1185">Reference proteome</keyword>
<keyword id="KW-0804">Transcription</keyword>
<keyword id="KW-0805">Transcription regulation</keyword>
<dbReference type="EMBL" id="AE017285">
    <property type="protein sequence ID" value="AAS96732.1"/>
    <property type="molecule type" value="Genomic_DNA"/>
</dbReference>
<dbReference type="RefSeq" id="WP_010939534.1">
    <property type="nucleotide sequence ID" value="NC_002937.3"/>
</dbReference>
<dbReference type="RefSeq" id="YP_011472.1">
    <property type="nucleotide sequence ID" value="NC_002937.3"/>
</dbReference>
<dbReference type="SMR" id="P62035"/>
<dbReference type="IntAct" id="P62035">
    <property type="interactions" value="2"/>
</dbReference>
<dbReference type="STRING" id="882.DVU_2259"/>
<dbReference type="PaxDb" id="882-DVU_2259"/>
<dbReference type="EnsemblBacteria" id="AAS96732">
    <property type="protein sequence ID" value="AAS96732"/>
    <property type="gene ID" value="DVU_2259"/>
</dbReference>
<dbReference type="KEGG" id="dvu:DVU_2259"/>
<dbReference type="PATRIC" id="fig|882.5.peg.2052"/>
<dbReference type="eggNOG" id="COG0217">
    <property type="taxonomic scope" value="Bacteria"/>
</dbReference>
<dbReference type="HOGENOM" id="CLU_062974_2_2_7"/>
<dbReference type="OrthoDB" id="9781053at2"/>
<dbReference type="PhylomeDB" id="P62035"/>
<dbReference type="Proteomes" id="UP000002194">
    <property type="component" value="Chromosome"/>
</dbReference>
<dbReference type="GO" id="GO:0005829">
    <property type="term" value="C:cytosol"/>
    <property type="evidence" value="ECO:0007669"/>
    <property type="project" value="TreeGrafter"/>
</dbReference>
<dbReference type="GO" id="GO:0003677">
    <property type="term" value="F:DNA binding"/>
    <property type="evidence" value="ECO:0007669"/>
    <property type="project" value="UniProtKB-UniRule"/>
</dbReference>
<dbReference type="GO" id="GO:0006355">
    <property type="term" value="P:regulation of DNA-templated transcription"/>
    <property type="evidence" value="ECO:0007669"/>
    <property type="project" value="UniProtKB-UniRule"/>
</dbReference>
<dbReference type="FunFam" id="1.10.10.200:FF:000002">
    <property type="entry name" value="Probable transcriptional regulatory protein CLM62_37755"/>
    <property type="match status" value="1"/>
</dbReference>
<dbReference type="FunFam" id="3.30.70.980:FF:000002">
    <property type="entry name" value="Probable transcriptional regulatory protein YebC"/>
    <property type="match status" value="1"/>
</dbReference>
<dbReference type="Gene3D" id="1.10.10.200">
    <property type="match status" value="1"/>
</dbReference>
<dbReference type="Gene3D" id="3.30.70.980">
    <property type="match status" value="2"/>
</dbReference>
<dbReference type="HAMAP" id="MF_00693">
    <property type="entry name" value="Transcrip_reg_TACO1"/>
    <property type="match status" value="1"/>
</dbReference>
<dbReference type="InterPro" id="IPR017856">
    <property type="entry name" value="Integrase-like_N"/>
</dbReference>
<dbReference type="InterPro" id="IPR048300">
    <property type="entry name" value="TACO1_YebC-like_2nd/3rd_dom"/>
</dbReference>
<dbReference type="InterPro" id="IPR049083">
    <property type="entry name" value="TACO1_YebC_N"/>
</dbReference>
<dbReference type="InterPro" id="IPR002876">
    <property type="entry name" value="Transcrip_reg_TACO1-like"/>
</dbReference>
<dbReference type="InterPro" id="IPR026564">
    <property type="entry name" value="Transcrip_reg_TACO1-like_dom3"/>
</dbReference>
<dbReference type="InterPro" id="IPR029072">
    <property type="entry name" value="YebC-like"/>
</dbReference>
<dbReference type="NCBIfam" id="NF001030">
    <property type="entry name" value="PRK00110.1"/>
    <property type="match status" value="1"/>
</dbReference>
<dbReference type="NCBIfam" id="NF009044">
    <property type="entry name" value="PRK12378.1"/>
    <property type="match status" value="1"/>
</dbReference>
<dbReference type="NCBIfam" id="TIGR01033">
    <property type="entry name" value="YebC/PmpR family DNA-binding transcriptional regulator"/>
    <property type="match status" value="1"/>
</dbReference>
<dbReference type="PANTHER" id="PTHR12532:SF6">
    <property type="entry name" value="TRANSCRIPTIONAL REGULATORY PROTEIN YEBC-RELATED"/>
    <property type="match status" value="1"/>
</dbReference>
<dbReference type="PANTHER" id="PTHR12532">
    <property type="entry name" value="TRANSLATIONAL ACTIVATOR OF CYTOCHROME C OXIDASE 1"/>
    <property type="match status" value="1"/>
</dbReference>
<dbReference type="Pfam" id="PF20772">
    <property type="entry name" value="TACO1_YebC_N"/>
    <property type="match status" value="1"/>
</dbReference>
<dbReference type="Pfam" id="PF01709">
    <property type="entry name" value="Transcrip_reg"/>
    <property type="match status" value="1"/>
</dbReference>
<dbReference type="SUPFAM" id="SSF75625">
    <property type="entry name" value="YebC-like"/>
    <property type="match status" value="1"/>
</dbReference>
<sequence length="247" mass="26576">MAGHSKWANIQHRKGRQDAKRGKMFTKAAKEIIIAAKAGGDPVGNSRLRAAIAAAKAINLPKDKIENAIKKGTGELAGGDILEMAYEGYGPGGVALIVEVATDNKNRTVAEVRHILSKHGGSMGESGCVAWMFDRKGVITLEKDKYTEEQLMEVALEAGAEDVTDEGESWEVVTAAADFNAVREALEAAGVEMQSAEFTMVPQNEIEVDAETGRKLMRLVDALEDNDDVQNVHANFDLPDELLAELG</sequence>